<protein>
    <recommendedName>
        <fullName>Nuclear receptor ROR-alpha A</fullName>
    </recommendedName>
    <alternativeName>
        <fullName evidence="7">Retinoid-related orphan receptor alpha 2</fullName>
    </alternativeName>
    <alternativeName>
        <fullName>Retinoid-related orphan receptor-alpha A</fullName>
    </alternativeName>
</protein>
<dbReference type="EMBL" id="AB298802">
    <property type="protein sequence ID" value="BAF76726.1"/>
    <property type="molecule type" value="mRNA"/>
</dbReference>
<dbReference type="EMBL" id="CABZ01027882">
    <property type="status" value="NOT_ANNOTATED_CDS"/>
    <property type="molecule type" value="Genomic_DNA"/>
</dbReference>
<dbReference type="EMBL" id="CABZ01027883">
    <property type="status" value="NOT_ANNOTATED_CDS"/>
    <property type="molecule type" value="Genomic_DNA"/>
</dbReference>
<dbReference type="EMBL" id="CABZ01027884">
    <property type="status" value="NOT_ANNOTATED_CDS"/>
    <property type="molecule type" value="Genomic_DNA"/>
</dbReference>
<dbReference type="EMBL" id="CABZ01027885">
    <property type="status" value="NOT_ANNOTATED_CDS"/>
    <property type="molecule type" value="Genomic_DNA"/>
</dbReference>
<dbReference type="EMBL" id="CU468885">
    <property type="status" value="NOT_ANNOTATED_CDS"/>
    <property type="molecule type" value="Genomic_DNA"/>
</dbReference>
<dbReference type="RefSeq" id="NP_001103637.1">
    <property type="nucleotide sequence ID" value="NM_001110167.1"/>
</dbReference>
<dbReference type="SMR" id="F1QLY4"/>
<dbReference type="FunCoup" id="F1QLY4">
    <property type="interactions" value="1297"/>
</dbReference>
<dbReference type="STRING" id="7955.ENSDARP00000106236"/>
<dbReference type="PaxDb" id="7955-ENSDARP00000106236"/>
<dbReference type="Ensembl" id="ENSDART00000121449">
    <property type="protein sequence ID" value="ENSDARP00000106236"/>
    <property type="gene ID" value="ENSDARG00000031768"/>
</dbReference>
<dbReference type="GeneID" id="564951"/>
<dbReference type="KEGG" id="dre:564951"/>
<dbReference type="AGR" id="ZFIN:ZDB-GENE-060306-2"/>
<dbReference type="CTD" id="564951"/>
<dbReference type="ZFIN" id="ZDB-GENE-060306-2">
    <property type="gene designation" value="roraa"/>
</dbReference>
<dbReference type="eggNOG" id="KOG4216">
    <property type="taxonomic scope" value="Eukaryota"/>
</dbReference>
<dbReference type="HOGENOM" id="CLU_007368_2_0_1"/>
<dbReference type="InParanoid" id="F1QLY4"/>
<dbReference type="OMA" id="VSMAELX"/>
<dbReference type="OrthoDB" id="8832025at2759"/>
<dbReference type="TreeFam" id="TF319910"/>
<dbReference type="Reactome" id="R-DRE-4090294">
    <property type="pathway name" value="SUMOylation of intracellular receptors"/>
</dbReference>
<dbReference type="PRO" id="PR:F1QLY4"/>
<dbReference type="Proteomes" id="UP000000437">
    <property type="component" value="Chromosome 25"/>
</dbReference>
<dbReference type="Bgee" id="ENSDARG00000031768">
    <property type="expression patterns" value="Expressed in layer of retina and 33 other cell types or tissues"/>
</dbReference>
<dbReference type="GO" id="GO:0005634">
    <property type="term" value="C:nucleus"/>
    <property type="evidence" value="ECO:0000318"/>
    <property type="project" value="GO_Central"/>
</dbReference>
<dbReference type="GO" id="GO:0004879">
    <property type="term" value="F:nuclear receptor activity"/>
    <property type="evidence" value="ECO:0000318"/>
    <property type="project" value="GO_Central"/>
</dbReference>
<dbReference type="GO" id="GO:0000978">
    <property type="term" value="F:RNA polymerase II cis-regulatory region sequence-specific DNA binding"/>
    <property type="evidence" value="ECO:0000318"/>
    <property type="project" value="GO_Central"/>
</dbReference>
<dbReference type="GO" id="GO:0008270">
    <property type="term" value="F:zinc ion binding"/>
    <property type="evidence" value="ECO:0007669"/>
    <property type="project" value="UniProtKB-KW"/>
</dbReference>
<dbReference type="GO" id="GO:0010628">
    <property type="term" value="P:positive regulation of gene expression"/>
    <property type="evidence" value="ECO:0000314"/>
    <property type="project" value="ZFIN"/>
</dbReference>
<dbReference type="GO" id="GO:0010468">
    <property type="term" value="P:regulation of gene expression"/>
    <property type="evidence" value="ECO:0000316"/>
    <property type="project" value="ZFIN"/>
</dbReference>
<dbReference type="GO" id="GO:0006357">
    <property type="term" value="P:regulation of transcription by RNA polymerase II"/>
    <property type="evidence" value="ECO:0000318"/>
    <property type="project" value="GO_Central"/>
</dbReference>
<dbReference type="GO" id="GO:0048511">
    <property type="term" value="P:rhythmic process"/>
    <property type="evidence" value="ECO:0007669"/>
    <property type="project" value="UniProtKB-KW"/>
</dbReference>
<dbReference type="CDD" id="cd06968">
    <property type="entry name" value="NR_DBD_ROR"/>
    <property type="match status" value="1"/>
</dbReference>
<dbReference type="CDD" id="cd06939">
    <property type="entry name" value="NR_LBD_ROR_like"/>
    <property type="match status" value="1"/>
</dbReference>
<dbReference type="FunFam" id="1.10.565.10:FF:000005">
    <property type="entry name" value="Nuclear orphan receptor ROR-beta"/>
    <property type="match status" value="1"/>
</dbReference>
<dbReference type="FunFam" id="3.30.50.10:FF:000003">
    <property type="entry name" value="Nuclear orphan receptor ROR-beta"/>
    <property type="match status" value="1"/>
</dbReference>
<dbReference type="Gene3D" id="3.30.50.10">
    <property type="entry name" value="Erythroid Transcription Factor GATA-1, subunit A"/>
    <property type="match status" value="1"/>
</dbReference>
<dbReference type="Gene3D" id="1.10.565.10">
    <property type="entry name" value="Retinoid X Receptor"/>
    <property type="match status" value="1"/>
</dbReference>
<dbReference type="InterPro" id="IPR035500">
    <property type="entry name" value="NHR-like_dom_sf"/>
</dbReference>
<dbReference type="InterPro" id="IPR044101">
    <property type="entry name" value="NR_DBD_ROR"/>
</dbReference>
<dbReference type="InterPro" id="IPR000536">
    <property type="entry name" value="Nucl_hrmn_rcpt_lig-bd"/>
</dbReference>
<dbReference type="InterPro" id="IPR001723">
    <property type="entry name" value="Nuclear_hrmn_rcpt"/>
</dbReference>
<dbReference type="InterPro" id="IPR003079">
    <property type="entry name" value="ROR_rcpt"/>
</dbReference>
<dbReference type="InterPro" id="IPR001628">
    <property type="entry name" value="Znf_hrmn_rcpt"/>
</dbReference>
<dbReference type="InterPro" id="IPR013088">
    <property type="entry name" value="Znf_NHR/GATA"/>
</dbReference>
<dbReference type="PANTHER" id="PTHR45805">
    <property type="entry name" value="NUCLEAR HORMONE RECEPTOR HR3-RELATED"/>
    <property type="match status" value="1"/>
</dbReference>
<dbReference type="PANTHER" id="PTHR45805:SF3">
    <property type="entry name" value="NUCLEAR RECEPTOR ROR-ALPHA"/>
    <property type="match status" value="1"/>
</dbReference>
<dbReference type="Pfam" id="PF00104">
    <property type="entry name" value="Hormone_recep"/>
    <property type="match status" value="1"/>
</dbReference>
<dbReference type="Pfam" id="PF00105">
    <property type="entry name" value="zf-C4"/>
    <property type="match status" value="1"/>
</dbReference>
<dbReference type="PRINTS" id="PR01293">
    <property type="entry name" value="RORNUCRECPTR"/>
</dbReference>
<dbReference type="PRINTS" id="PR00398">
    <property type="entry name" value="STRDHORMONER"/>
</dbReference>
<dbReference type="PRINTS" id="PR00047">
    <property type="entry name" value="STROIDFINGER"/>
</dbReference>
<dbReference type="SMART" id="SM00430">
    <property type="entry name" value="HOLI"/>
    <property type="match status" value="1"/>
</dbReference>
<dbReference type="SMART" id="SM00399">
    <property type="entry name" value="ZnF_C4"/>
    <property type="match status" value="1"/>
</dbReference>
<dbReference type="SUPFAM" id="SSF57716">
    <property type="entry name" value="Glucocorticoid receptor-like (DNA-binding domain)"/>
    <property type="match status" value="1"/>
</dbReference>
<dbReference type="SUPFAM" id="SSF48508">
    <property type="entry name" value="Nuclear receptor ligand-binding domain"/>
    <property type="match status" value="1"/>
</dbReference>
<dbReference type="PROSITE" id="PS51843">
    <property type="entry name" value="NR_LBD"/>
    <property type="match status" value="1"/>
</dbReference>
<dbReference type="PROSITE" id="PS00031">
    <property type="entry name" value="NUCLEAR_REC_DBD_1"/>
    <property type="match status" value="1"/>
</dbReference>
<dbReference type="PROSITE" id="PS51030">
    <property type="entry name" value="NUCLEAR_REC_DBD_2"/>
    <property type="match status" value="1"/>
</dbReference>
<sequence>MMYFVISAMKAQIEIIPCKICGDKSSGIHYGVITCEGCKGFFRRSQQSNAAYSCPRQKNCLIDRTSRNRCQHCRLQKCLAVGMSRDAVKFGRMSKKQRDSLYAEVQKHRLQQQQRDHQQQPGEAEPLTPTYGLSTNGLTELHDDLSGYMNGHTPDGTKPDSGVSSFYLDIQPSPDQSGLDINGIKPEPICDFTPGSGFFPYCSFTNGETSPTVSMAELEHLAQNISKSHMETCQYLREELQQMTWQAFLQEEVENYQSKPREVMWQLCAIKITEAIQYVVEFAKRIDGFMELCQNDQIVLLKAGSLEVVFVRMCRAFDPQNNTVYFDGKYAGPDVFKSLGCDDLISSVFEFGKNLCSMHLSEDEIALFSAFVLMSADRSWLQEKVKVEKLQQKIQLALQHVLQKNHREDGILTKLICKVSTLRALCSRHTEKLTAFKAIYPDIVRAHFPPLYKELFGSDFEQSMPVDG</sequence>
<keyword id="KW-0010">Activator</keyword>
<keyword id="KW-0090">Biological rhythms</keyword>
<keyword id="KW-0217">Developmental protein</keyword>
<keyword id="KW-0238">DNA-binding</keyword>
<keyword id="KW-0479">Metal-binding</keyword>
<keyword id="KW-0539">Nucleus</keyword>
<keyword id="KW-0675">Receptor</keyword>
<keyword id="KW-1185">Reference proteome</keyword>
<keyword id="KW-0804">Transcription</keyword>
<keyword id="KW-0805">Transcription regulation</keyword>
<keyword id="KW-0862">Zinc</keyword>
<keyword id="KW-0863">Zinc-finger</keyword>
<reference key="1">
    <citation type="journal article" date="2007" name="Dev. Dyn.">
        <title>Expression of zebrafish ROR alpha gene in cerebellar-like structures.</title>
        <authorList>
            <person name="Katsuyama Y."/>
            <person name="Oomiya Y."/>
            <person name="Dekimoto H."/>
            <person name="Motooka E."/>
            <person name="Takano A."/>
            <person name="Kikkawa S."/>
            <person name="Hibi M."/>
            <person name="Terashima T."/>
        </authorList>
    </citation>
    <scope>NUCLEOTIDE SEQUENCE [MRNA]</scope>
    <scope>DEVELOPMENTAL STAGE</scope>
    <scope>TISSUE SPECIFICITY</scope>
    <source>
        <tissue>Embryo</tissue>
    </source>
</reference>
<reference key="2">
    <citation type="journal article" date="2013" name="Nature">
        <title>The zebrafish reference genome sequence and its relationship to the human genome.</title>
        <authorList>
            <person name="Howe K."/>
            <person name="Clark M.D."/>
            <person name="Torroja C.F."/>
            <person name="Torrance J."/>
            <person name="Berthelot C."/>
            <person name="Muffato M."/>
            <person name="Collins J.E."/>
            <person name="Humphray S."/>
            <person name="McLaren K."/>
            <person name="Matthews L."/>
            <person name="McLaren S."/>
            <person name="Sealy I."/>
            <person name="Caccamo M."/>
            <person name="Churcher C."/>
            <person name="Scott C."/>
            <person name="Barrett J.C."/>
            <person name="Koch R."/>
            <person name="Rauch G.J."/>
            <person name="White S."/>
            <person name="Chow W."/>
            <person name="Kilian B."/>
            <person name="Quintais L.T."/>
            <person name="Guerra-Assuncao J.A."/>
            <person name="Zhou Y."/>
            <person name="Gu Y."/>
            <person name="Yen J."/>
            <person name="Vogel J.H."/>
            <person name="Eyre T."/>
            <person name="Redmond S."/>
            <person name="Banerjee R."/>
            <person name="Chi J."/>
            <person name="Fu B."/>
            <person name="Langley E."/>
            <person name="Maguire S.F."/>
            <person name="Laird G.K."/>
            <person name="Lloyd D."/>
            <person name="Kenyon E."/>
            <person name="Donaldson S."/>
            <person name="Sehra H."/>
            <person name="Almeida-King J."/>
            <person name="Loveland J."/>
            <person name="Trevanion S."/>
            <person name="Jones M."/>
            <person name="Quail M."/>
            <person name="Willey D."/>
            <person name="Hunt A."/>
            <person name="Burton J."/>
            <person name="Sims S."/>
            <person name="McLay K."/>
            <person name="Plumb B."/>
            <person name="Davis J."/>
            <person name="Clee C."/>
            <person name="Oliver K."/>
            <person name="Clark R."/>
            <person name="Riddle C."/>
            <person name="Elliot D."/>
            <person name="Threadgold G."/>
            <person name="Harden G."/>
            <person name="Ware D."/>
            <person name="Begum S."/>
            <person name="Mortimore B."/>
            <person name="Kerry G."/>
            <person name="Heath P."/>
            <person name="Phillimore B."/>
            <person name="Tracey A."/>
            <person name="Corby N."/>
            <person name="Dunn M."/>
            <person name="Johnson C."/>
            <person name="Wood J."/>
            <person name="Clark S."/>
            <person name="Pelan S."/>
            <person name="Griffiths G."/>
            <person name="Smith M."/>
            <person name="Glithero R."/>
            <person name="Howden P."/>
            <person name="Barker N."/>
            <person name="Lloyd C."/>
            <person name="Stevens C."/>
            <person name="Harley J."/>
            <person name="Holt K."/>
            <person name="Panagiotidis G."/>
            <person name="Lovell J."/>
            <person name="Beasley H."/>
            <person name="Henderson C."/>
            <person name="Gordon D."/>
            <person name="Auger K."/>
            <person name="Wright D."/>
            <person name="Collins J."/>
            <person name="Raisen C."/>
            <person name="Dyer L."/>
            <person name="Leung K."/>
            <person name="Robertson L."/>
            <person name="Ambridge K."/>
            <person name="Leongamornlert D."/>
            <person name="McGuire S."/>
            <person name="Gilderthorp R."/>
            <person name="Griffiths C."/>
            <person name="Manthravadi D."/>
            <person name="Nichol S."/>
            <person name="Barker G."/>
            <person name="Whitehead S."/>
            <person name="Kay M."/>
            <person name="Brown J."/>
            <person name="Murnane C."/>
            <person name="Gray E."/>
            <person name="Humphries M."/>
            <person name="Sycamore N."/>
            <person name="Barker D."/>
            <person name="Saunders D."/>
            <person name="Wallis J."/>
            <person name="Babbage A."/>
            <person name="Hammond S."/>
            <person name="Mashreghi-Mohammadi M."/>
            <person name="Barr L."/>
            <person name="Martin S."/>
            <person name="Wray P."/>
            <person name="Ellington A."/>
            <person name="Matthews N."/>
            <person name="Ellwood M."/>
            <person name="Woodmansey R."/>
            <person name="Clark G."/>
            <person name="Cooper J."/>
            <person name="Tromans A."/>
            <person name="Grafham D."/>
            <person name="Skuce C."/>
            <person name="Pandian R."/>
            <person name="Andrews R."/>
            <person name="Harrison E."/>
            <person name="Kimberley A."/>
            <person name="Garnett J."/>
            <person name="Fosker N."/>
            <person name="Hall R."/>
            <person name="Garner P."/>
            <person name="Kelly D."/>
            <person name="Bird C."/>
            <person name="Palmer S."/>
            <person name="Gehring I."/>
            <person name="Berger A."/>
            <person name="Dooley C.M."/>
            <person name="Ersan-Urun Z."/>
            <person name="Eser C."/>
            <person name="Geiger H."/>
            <person name="Geisler M."/>
            <person name="Karotki L."/>
            <person name="Kirn A."/>
            <person name="Konantz J."/>
            <person name="Konantz M."/>
            <person name="Oberlander M."/>
            <person name="Rudolph-Geiger S."/>
            <person name="Teucke M."/>
            <person name="Lanz C."/>
            <person name="Raddatz G."/>
            <person name="Osoegawa K."/>
            <person name="Zhu B."/>
            <person name="Rapp A."/>
            <person name="Widaa S."/>
            <person name="Langford C."/>
            <person name="Yang F."/>
            <person name="Schuster S.C."/>
            <person name="Carter N.P."/>
            <person name="Harrow J."/>
            <person name="Ning Z."/>
            <person name="Herrero J."/>
            <person name="Searle S.M."/>
            <person name="Enright A."/>
            <person name="Geisler R."/>
            <person name="Plasterk R.H."/>
            <person name="Lee C."/>
            <person name="Westerfield M."/>
            <person name="de Jong P.J."/>
            <person name="Zon L.I."/>
            <person name="Postlethwait J.H."/>
            <person name="Nusslein-Volhard C."/>
            <person name="Hubbard T.J."/>
            <person name="Roest Crollius H."/>
            <person name="Rogers J."/>
            <person name="Stemple D.L."/>
        </authorList>
    </citation>
    <scope>NUCLEOTIDE SEQUENCE [LARGE SCALE GENOMIC DNA]</scope>
    <source>
        <strain>Tuebingen</strain>
    </source>
</reference>
<reference key="3">
    <citation type="journal article" date="2018" name="Am. J. Hum. Genet.">
        <title>Dual molecular effects of dominant RORA mutations cause two variants of syndromic intellectual disability with either autism or cerebellar ataxia.</title>
        <authorList>
            <person name="Guissart C."/>
            <person name="Latypova X."/>
            <person name="Rollier P."/>
            <person name="Khan T.N."/>
            <person name="Stamberger H."/>
            <person name="McWalter K."/>
            <person name="Cho M.T."/>
            <person name="Kjaergaard S."/>
            <person name="Weckhuysen S."/>
            <person name="Lesca G."/>
            <person name="Besnard T."/>
            <person name="Ounap K."/>
            <person name="Schema L."/>
            <person name="Chiocchetti A.G."/>
            <person name="McDonald M."/>
            <person name="de Bellescize J."/>
            <person name="Vincent M."/>
            <person name="Van Esch H."/>
            <person name="Sattler S."/>
            <person name="Forghani I."/>
            <person name="Thiffault I."/>
            <person name="Freitag C.M."/>
            <person name="Barbouth D.S."/>
            <person name="Cadieux-Dion M."/>
            <person name="Willaert R."/>
            <person name="Guillen Sacoto M.J."/>
            <person name="Safina N.P."/>
            <person name="Dubourg C."/>
            <person name="Grote L."/>
            <person name="Carre W."/>
            <person name="Saunders C."/>
            <person name="Pajusalu S."/>
            <person name="Farrow E."/>
            <person name="Boland A."/>
            <person name="Karlowicz D.H."/>
            <person name="Deleuze J.F."/>
            <person name="Wojcik M.H."/>
            <person name="Pressman R."/>
            <person name="Isidor B."/>
            <person name="Vogels A."/>
            <person name="Van Paesschen W."/>
            <person name="Al-Gazali L."/>
            <person name="Al Shamsi A.M."/>
            <person name="Claustres M."/>
            <person name="Pujol A."/>
            <person name="Sanders S.J."/>
            <person name="Rivier F."/>
            <person name="Leboucq N."/>
            <person name="Cogne B."/>
            <person name="Sasorith S."/>
            <person name="Sanlaville D."/>
            <person name="Retterer K."/>
            <person name="Odent S."/>
            <person name="Katsanis N."/>
            <person name="Bezieau S."/>
            <person name="Koenig M."/>
            <person name="Davis E.E."/>
            <person name="Pasquier L."/>
            <person name="Kuery S."/>
        </authorList>
    </citation>
    <scope>FUNCTION</scope>
    <scope>DISRUPTION PHENOTYPE</scope>
</reference>
<gene>
    <name type="primary">roraa</name>
    <name evidence="7" type="synonym">rora2</name>
</gene>
<accession>F1QLY4</accession>
<accession>A7VL70</accession>
<accession>F8W254</accession>
<name>RORAA_DANRE</name>
<comment type="function">
    <text evidence="1 6">Nuclear receptor that binds DNA as a monomer to ROR response elements (RORE) (By similarity). Required for proper cerebellum development (PubMed:29656859).</text>
</comment>
<comment type="subcellular location">
    <subcellularLocation>
        <location evidence="1 2">Nucleus</location>
    </subcellularLocation>
</comment>
<comment type="tissue specificity">
    <text evidence="5">Expressed in the brain, in cerebellar-like structures, including Purkinje cells.</text>
</comment>
<comment type="developmental stage">
    <text evidence="5">At 2 dpf, strongly expressed in the developing eyes, as well as midbrain and hindbrain regions. In 3 dpf larvae, expressed in the upper rhombic lip. At 3 dpf, expression in the retina is weak and becomes spatially restricted in the inner nuclear layer. Weakly expressed in the forebrain region.</text>
</comment>
<comment type="disruption phenotype">
    <text evidence="6">Morpholino knockdown of the protein results in a reduced cerebellar area and smaller optic tecta area compared to control larvae. At 3 dpf, transgenic larvae present with a significantly decreased size of Purkinje and granule cell layers compared to controls.</text>
</comment>
<comment type="similarity">
    <text evidence="8">Belongs to the nuclear hormone receptor family. NR1 subfamily.</text>
</comment>
<proteinExistence type="evidence at transcript level"/>
<feature type="chain" id="PRO_0000445778" description="Nuclear receptor ROR-alpha A">
    <location>
        <begin position="1"/>
        <end position="468"/>
    </location>
</feature>
<feature type="domain" description="NR LBD" evidence="3">
    <location>
        <begin position="217"/>
        <end position="455"/>
    </location>
</feature>
<feature type="DNA-binding region" description="Nuclear receptor" evidence="2">
    <location>
        <begin position="15"/>
        <end position="90"/>
    </location>
</feature>
<feature type="zinc finger region" description="NR C4-type" evidence="2">
    <location>
        <begin position="18"/>
        <end position="38"/>
    </location>
</feature>
<feature type="zinc finger region" description="NR C4-type" evidence="2">
    <location>
        <begin position="54"/>
        <end position="73"/>
    </location>
</feature>
<feature type="region of interest" description="Disordered" evidence="4">
    <location>
        <begin position="101"/>
        <end position="129"/>
    </location>
</feature>
<feature type="region of interest" description="Disordered" evidence="4">
    <location>
        <begin position="142"/>
        <end position="163"/>
    </location>
</feature>
<feature type="region of interest" description="AF-2" evidence="3">
    <location>
        <begin position="444"/>
        <end position="455"/>
    </location>
</feature>
<feature type="sequence conflict" description="In Ref. 1; BAF76726." evidence="8" ref="1">
    <original>R</original>
    <variation>H</variation>
    <location>
        <position position="285"/>
    </location>
</feature>
<organism>
    <name type="scientific">Danio rerio</name>
    <name type="common">Zebrafish</name>
    <name type="synonym">Brachydanio rerio</name>
    <dbReference type="NCBI Taxonomy" id="7955"/>
    <lineage>
        <taxon>Eukaryota</taxon>
        <taxon>Metazoa</taxon>
        <taxon>Chordata</taxon>
        <taxon>Craniata</taxon>
        <taxon>Vertebrata</taxon>
        <taxon>Euteleostomi</taxon>
        <taxon>Actinopterygii</taxon>
        <taxon>Neopterygii</taxon>
        <taxon>Teleostei</taxon>
        <taxon>Ostariophysi</taxon>
        <taxon>Cypriniformes</taxon>
        <taxon>Danionidae</taxon>
        <taxon>Danioninae</taxon>
        <taxon>Danio</taxon>
    </lineage>
</organism>
<evidence type="ECO:0000250" key="1">
    <source>
        <dbReference type="UniProtKB" id="P35398"/>
    </source>
</evidence>
<evidence type="ECO:0000255" key="2">
    <source>
        <dbReference type="PROSITE-ProRule" id="PRU00407"/>
    </source>
</evidence>
<evidence type="ECO:0000255" key="3">
    <source>
        <dbReference type="PROSITE-ProRule" id="PRU01189"/>
    </source>
</evidence>
<evidence type="ECO:0000256" key="4">
    <source>
        <dbReference type="SAM" id="MobiDB-lite"/>
    </source>
</evidence>
<evidence type="ECO:0000269" key="5">
    <source>
    </source>
</evidence>
<evidence type="ECO:0000269" key="6">
    <source>
    </source>
</evidence>
<evidence type="ECO:0000303" key="7">
    <source>
    </source>
</evidence>
<evidence type="ECO:0000305" key="8"/>